<comment type="function">
    <text evidence="1">Participates in chromosomal partition during cell division. May act via the formation of a condensin-like complex containing Smc and ScpB that pull DNA away from mid-cell into both cell halves.</text>
</comment>
<comment type="subunit">
    <text evidence="1">Component of a cohesin-like complex composed of ScpA, ScpB and the Smc homodimer, in which ScpA and ScpB bind to the head domain of Smc. The presence of the three proteins is required for the association of the complex with DNA.</text>
</comment>
<comment type="subcellular location">
    <subcellularLocation>
        <location evidence="1">Cytoplasm</location>
    </subcellularLocation>
    <text evidence="1">Associated with two foci at the outer edges of the nucleoid region in young cells, and at four foci within both cell halves in older cells.</text>
</comment>
<comment type="similarity">
    <text evidence="1">Belongs to the ScpA family.</text>
</comment>
<keyword id="KW-0131">Cell cycle</keyword>
<keyword id="KW-0132">Cell division</keyword>
<keyword id="KW-0159">Chromosome partition</keyword>
<keyword id="KW-0963">Cytoplasm</keyword>
<feature type="chain" id="PRO_1000187548" description="Segregation and condensation protein A">
    <location>
        <begin position="1"/>
        <end position="247"/>
    </location>
</feature>
<accession>C3P7J3</accession>
<proteinExistence type="inferred from homology"/>
<sequence length="247" mass="29347">MQYNFKVEAFEGPLDLLLHLIHRYEIDIYNIPVAEITEQYLSYVHTMKELQLDVASEYLVMAATLLQIKSKMLLPKHEEDVLDNGDDFIDDPRQELMERLIEYKKYKQVATELKEREQERAQLYTRPPIDFTSLQQEEETNLPLDVTLYDMLAAFQKLMRRKKAEKPVTTRITRQEIPIEQRMTDILKQLEIQGGRQSFYDLFVDDEREIMVVTFLAVLELMKNQQIIIEQEHNFDEIFVSSYTKSA</sequence>
<organism>
    <name type="scientific">Bacillus anthracis (strain A0248)</name>
    <dbReference type="NCBI Taxonomy" id="592021"/>
    <lineage>
        <taxon>Bacteria</taxon>
        <taxon>Bacillati</taxon>
        <taxon>Bacillota</taxon>
        <taxon>Bacilli</taxon>
        <taxon>Bacillales</taxon>
        <taxon>Bacillaceae</taxon>
        <taxon>Bacillus</taxon>
        <taxon>Bacillus cereus group</taxon>
    </lineage>
</organism>
<protein>
    <recommendedName>
        <fullName evidence="1">Segregation and condensation protein A</fullName>
    </recommendedName>
</protein>
<reference key="1">
    <citation type="submission" date="2009-04" db="EMBL/GenBank/DDBJ databases">
        <title>Genome sequence of Bacillus anthracis A0248.</title>
        <authorList>
            <person name="Dodson R.J."/>
            <person name="Munk A.C."/>
            <person name="Bruce D."/>
            <person name="Detter C."/>
            <person name="Tapia R."/>
            <person name="Sutton G."/>
            <person name="Sims D."/>
            <person name="Brettin T."/>
        </authorList>
    </citation>
    <scope>NUCLEOTIDE SEQUENCE [LARGE SCALE GENOMIC DNA]</scope>
    <source>
        <strain>A0248</strain>
    </source>
</reference>
<gene>
    <name evidence="1" type="primary">scpA</name>
    <name type="ordered locus">BAA_4300</name>
</gene>
<name>SCPA_BACAA</name>
<evidence type="ECO:0000255" key="1">
    <source>
        <dbReference type="HAMAP-Rule" id="MF_01805"/>
    </source>
</evidence>
<dbReference type="EMBL" id="CP001598">
    <property type="protein sequence ID" value="ACQ46405.1"/>
    <property type="molecule type" value="Genomic_DNA"/>
</dbReference>
<dbReference type="RefSeq" id="WP_001199756.1">
    <property type="nucleotide sequence ID" value="NC_012659.1"/>
</dbReference>
<dbReference type="SMR" id="C3P7J3"/>
<dbReference type="GeneID" id="45023947"/>
<dbReference type="KEGG" id="bai:BAA_4300"/>
<dbReference type="HOGENOM" id="CLU_038686_3_1_9"/>
<dbReference type="GO" id="GO:0005737">
    <property type="term" value="C:cytoplasm"/>
    <property type="evidence" value="ECO:0007669"/>
    <property type="project" value="UniProtKB-SubCell"/>
</dbReference>
<dbReference type="GO" id="GO:0051301">
    <property type="term" value="P:cell division"/>
    <property type="evidence" value="ECO:0007669"/>
    <property type="project" value="UniProtKB-KW"/>
</dbReference>
<dbReference type="GO" id="GO:0007059">
    <property type="term" value="P:chromosome segregation"/>
    <property type="evidence" value="ECO:0007669"/>
    <property type="project" value="UniProtKB-UniRule"/>
</dbReference>
<dbReference type="GO" id="GO:0006260">
    <property type="term" value="P:DNA replication"/>
    <property type="evidence" value="ECO:0007669"/>
    <property type="project" value="UniProtKB-UniRule"/>
</dbReference>
<dbReference type="Gene3D" id="6.10.250.2410">
    <property type="match status" value="1"/>
</dbReference>
<dbReference type="Gene3D" id="1.10.10.580">
    <property type="entry name" value="Structural maintenance of chromosome 1. Chain E"/>
    <property type="match status" value="1"/>
</dbReference>
<dbReference type="HAMAP" id="MF_01805">
    <property type="entry name" value="ScpA"/>
    <property type="match status" value="1"/>
</dbReference>
<dbReference type="InterPro" id="IPR003768">
    <property type="entry name" value="ScpA"/>
</dbReference>
<dbReference type="InterPro" id="IPR023093">
    <property type="entry name" value="ScpA-like_C"/>
</dbReference>
<dbReference type="NCBIfam" id="NF000992">
    <property type="entry name" value="PRK00104.1-1"/>
    <property type="match status" value="1"/>
</dbReference>
<dbReference type="NCBIfam" id="NF000995">
    <property type="entry name" value="PRK00104.1-4"/>
    <property type="match status" value="1"/>
</dbReference>
<dbReference type="PANTHER" id="PTHR33969">
    <property type="entry name" value="SEGREGATION AND CONDENSATION PROTEIN A"/>
    <property type="match status" value="1"/>
</dbReference>
<dbReference type="PANTHER" id="PTHR33969:SF2">
    <property type="entry name" value="SEGREGATION AND CONDENSATION PROTEIN A"/>
    <property type="match status" value="1"/>
</dbReference>
<dbReference type="Pfam" id="PF02616">
    <property type="entry name" value="SMC_ScpA"/>
    <property type="match status" value="1"/>
</dbReference>